<organism>
    <name type="scientific">Mus musculus</name>
    <name type="common">Mouse</name>
    <dbReference type="NCBI Taxonomy" id="10090"/>
    <lineage>
        <taxon>Eukaryota</taxon>
        <taxon>Metazoa</taxon>
        <taxon>Chordata</taxon>
        <taxon>Craniata</taxon>
        <taxon>Vertebrata</taxon>
        <taxon>Euteleostomi</taxon>
        <taxon>Mammalia</taxon>
        <taxon>Eutheria</taxon>
        <taxon>Euarchontoglires</taxon>
        <taxon>Glires</taxon>
        <taxon>Rodentia</taxon>
        <taxon>Myomorpha</taxon>
        <taxon>Muroidea</taxon>
        <taxon>Muridae</taxon>
        <taxon>Murinae</taxon>
        <taxon>Mus</taxon>
        <taxon>Mus</taxon>
    </lineage>
</organism>
<gene>
    <name evidence="15" type="primary">Mast1</name>
    <name type="synonym">Kiaa0973</name>
    <name evidence="15" type="synonym">Sast</name>
</gene>
<name>MAST1_MOUSE</name>
<reference evidence="11 12" key="1">
    <citation type="journal article" date="1999" name="Nat. Neurosci.">
        <title>Interactions between beta 2-syntrophin and a family of microtubule-associated serine/threonine kinases.</title>
        <authorList>
            <person name="Lumeng C."/>
            <person name="Phelps S."/>
            <person name="Crawford G.E."/>
            <person name="Walden P.D."/>
            <person name="Barald K."/>
            <person name="Chamberlain J.S."/>
        </authorList>
    </citation>
    <scope>NUCLEOTIDE SEQUENCE [MRNA]</scope>
    <scope>FUNCTION</scope>
    <scope>SUBCELLULAR LOCATION</scope>
    <scope>TISSUE SPECIFICITY</scope>
    <scope>INTERACTION WITH SNTB2</scope>
    <source>
        <strain evidence="12">C57BL/10</strain>
    </source>
</reference>
<reference evidence="11 13" key="2">
    <citation type="journal article" date="2004" name="Genome Res.">
        <title>The status, quality, and expansion of the NIH full-length cDNA project: the Mammalian Gene Collection (MGC).</title>
        <authorList>
            <consortium name="The MGC Project Team"/>
        </authorList>
    </citation>
    <scope>NUCLEOTIDE SEQUENCE [LARGE SCALE MRNA]</scope>
    <source>
        <strain evidence="13">C57BL/6J</strain>
        <tissue evidence="13">Brain</tissue>
    </source>
</reference>
<reference evidence="11 14" key="3">
    <citation type="journal article" date="2003" name="DNA Res.">
        <title>Prediction of the coding sequences of mouse homologues of KIAA gene: II. The complete nucleotide sequences of 400 mouse KIAA-homologous cDNAs identified by screening of terminal sequences of cDNA clones randomly sampled from size-fractionated libraries.</title>
        <authorList>
            <person name="Okazaki N."/>
            <person name="Kikuno R."/>
            <person name="Ohara R."/>
            <person name="Inamoto S."/>
            <person name="Aizawa H."/>
            <person name="Yuasa S."/>
            <person name="Nakajima D."/>
            <person name="Nagase T."/>
            <person name="Ohara O."/>
            <person name="Koga H."/>
        </authorList>
    </citation>
    <scope>NUCLEOTIDE SEQUENCE [LARGE SCALE MRNA] OF 337-1570</scope>
    <source>
        <tissue evidence="14">Brain</tissue>
    </source>
</reference>
<reference evidence="11" key="4">
    <citation type="submission" date="2003-12" db="EMBL/GenBank/DDBJ databases">
        <authorList>
            <person name="Okazaki N."/>
            <person name="Kikuno R."/>
            <person name="Nagase T."/>
            <person name="Ohara O."/>
            <person name="Koga H."/>
        </authorList>
    </citation>
    <scope>SEQUENCE REVISION</scope>
</reference>
<reference key="5">
    <citation type="journal article" date="2006" name="Mol. Cell. Proteomics">
        <title>Comprehensive identification of phosphorylation sites in postsynaptic density preparations.</title>
        <authorList>
            <person name="Trinidad J.C."/>
            <person name="Specht C.G."/>
            <person name="Thalhammer A."/>
            <person name="Schoepfer R."/>
            <person name="Burlingame A.L."/>
        </authorList>
    </citation>
    <scope>IDENTIFICATION BY MASS SPECTROMETRY [LARGE SCALE ANALYSIS]</scope>
    <source>
        <tissue>Brain</tissue>
    </source>
</reference>
<reference key="6">
    <citation type="journal article" date="2010" name="Cell">
        <title>A tissue-specific atlas of mouse protein phosphorylation and expression.</title>
        <authorList>
            <person name="Huttlin E.L."/>
            <person name="Jedrychowski M.P."/>
            <person name="Elias J.E."/>
            <person name="Goswami T."/>
            <person name="Rad R."/>
            <person name="Beausoleil S.A."/>
            <person name="Villen J."/>
            <person name="Haas W."/>
            <person name="Sowa M.E."/>
            <person name="Gygi S.P."/>
        </authorList>
    </citation>
    <scope>PHOSPHORYLATION [LARGE SCALE ANALYSIS] AT SER-90; SER-139; SER-167 AND SER-895</scope>
    <scope>IDENTIFICATION BY MASS SPECTROMETRY [LARGE SCALE ANALYSIS]</scope>
    <source>
        <tissue>Brain</tissue>
    </source>
</reference>
<reference key="7">
    <citation type="journal article" date="2018" name="Neuron">
        <title>Mutations in MAST1 cause mega-corpus-callosum syndrome with cerebellar hypoplasia and cortical malformations.</title>
        <authorList>
            <person name="Tripathy R."/>
            <person name="Leca I."/>
            <person name="van Dijk T."/>
            <person name="Weiss J."/>
            <person name="van Bon B.W."/>
            <person name="Sergaki M.C."/>
            <person name="Gstrein T."/>
            <person name="Breuss M."/>
            <person name="Tian G."/>
            <person name="Bahi-Buisson N."/>
            <person name="Paciorkowski A.R."/>
            <person name="Pagnamenta A.T."/>
            <person name="Wenninger-Weinzierl A."/>
            <person name="Martinez-Reza M.F."/>
            <person name="Landler L."/>
            <person name="Lise S."/>
            <person name="Taylor J.C."/>
            <person name="Terrone G."/>
            <person name="Vitiello G."/>
            <person name="Del Giudice E."/>
            <person name="Brunetti-Pierri N."/>
            <person name="D'Amico A."/>
            <person name="Reymond A."/>
            <person name="Voisin N."/>
            <person name="Bernstein J.A."/>
            <person name="Farrelly E."/>
            <person name="Kini U."/>
            <person name="Leonard T.A."/>
            <person name="Valence S."/>
            <person name="Burglen L."/>
            <person name="Armstrong L."/>
            <person name="Hiatt S.M."/>
            <person name="Cooper G.M."/>
            <person name="Aldinger K.A."/>
            <person name="Dobyns W.B."/>
            <person name="Mirzaa G."/>
            <person name="Pierson T.M."/>
            <person name="Baas F."/>
            <person name="Chelly J."/>
            <person name="Cowan N.J."/>
            <person name="Keays D.A."/>
        </authorList>
    </citation>
    <scope>FUNCTION</scope>
    <scope>SUBUNIT</scope>
    <scope>TISSUE SPECIFICITY</scope>
    <scope>DEVELOPMENTAL STAGE</scope>
    <scope>SUBCELLULAR LOCATION</scope>
    <scope>DISRUPTION PHENOTYPE</scope>
    <scope>MUTAGENESIS OF LEU-279</scope>
</reference>
<accession>Q9R1L5</accession>
<accession>Q7TQG9</accession>
<accession>Q80TN0</accession>
<keyword id="KW-0067">ATP-binding</keyword>
<keyword id="KW-1003">Cell membrane</keyword>
<keyword id="KW-0966">Cell projection</keyword>
<keyword id="KW-0963">Cytoplasm</keyword>
<keyword id="KW-0206">Cytoskeleton</keyword>
<keyword id="KW-0418">Kinase</keyword>
<keyword id="KW-0460">Magnesium</keyword>
<keyword id="KW-0472">Membrane</keyword>
<keyword id="KW-0479">Metal-binding</keyword>
<keyword id="KW-0547">Nucleotide-binding</keyword>
<keyword id="KW-0597">Phosphoprotein</keyword>
<keyword id="KW-1185">Reference proteome</keyword>
<keyword id="KW-0723">Serine/threonine-protein kinase</keyword>
<keyword id="KW-0808">Transferase</keyword>
<feature type="chain" id="PRO_0000086310" description="Microtubule-associated serine/threonine-protein kinase 1">
    <location>
        <begin position="1"/>
        <end position="1570"/>
    </location>
</feature>
<feature type="domain" description="Protein kinase" evidence="4">
    <location>
        <begin position="375"/>
        <end position="648"/>
    </location>
</feature>
<feature type="domain" description="AGC-kinase C-terminal" evidence="5">
    <location>
        <begin position="650"/>
        <end position="721"/>
    </location>
</feature>
<feature type="domain" description="PDZ" evidence="3">
    <location>
        <begin position="968"/>
        <end position="1056"/>
    </location>
</feature>
<feature type="region of interest" description="Disordered" evidence="7">
    <location>
        <begin position="23"/>
        <end position="80"/>
    </location>
</feature>
<feature type="region of interest" description="Disordered" evidence="7">
    <location>
        <begin position="94"/>
        <end position="117"/>
    </location>
</feature>
<feature type="region of interest" description="Disordered" evidence="7">
    <location>
        <begin position="139"/>
        <end position="171"/>
    </location>
</feature>
<feature type="region of interest" description="Disordered" evidence="7">
    <location>
        <begin position="341"/>
        <end position="377"/>
    </location>
</feature>
<feature type="region of interest" description="Disordered" evidence="7">
    <location>
        <begin position="717"/>
        <end position="885"/>
    </location>
</feature>
<feature type="region of interest" description="Disordered" evidence="7">
    <location>
        <begin position="892"/>
        <end position="911"/>
    </location>
</feature>
<feature type="region of interest" description="Disordered" evidence="7">
    <location>
        <begin position="931"/>
        <end position="967"/>
    </location>
</feature>
<feature type="region of interest" description="Disordered" evidence="7">
    <location>
        <begin position="1061"/>
        <end position="1186"/>
    </location>
</feature>
<feature type="region of interest" description="Disordered" evidence="7">
    <location>
        <begin position="1202"/>
        <end position="1294"/>
    </location>
</feature>
<feature type="region of interest" description="Disordered" evidence="7">
    <location>
        <begin position="1308"/>
        <end position="1570"/>
    </location>
</feature>
<feature type="compositionally biased region" description="Polar residues" evidence="7">
    <location>
        <begin position="29"/>
        <end position="45"/>
    </location>
</feature>
<feature type="compositionally biased region" description="Polar residues" evidence="7">
    <location>
        <begin position="66"/>
        <end position="80"/>
    </location>
</feature>
<feature type="compositionally biased region" description="Polar residues" evidence="7">
    <location>
        <begin position="94"/>
        <end position="104"/>
    </location>
</feature>
<feature type="compositionally biased region" description="Low complexity" evidence="7">
    <location>
        <begin position="105"/>
        <end position="114"/>
    </location>
</feature>
<feature type="compositionally biased region" description="Low complexity" evidence="7">
    <location>
        <begin position="151"/>
        <end position="170"/>
    </location>
</feature>
<feature type="compositionally biased region" description="Basic and acidic residues" evidence="7">
    <location>
        <begin position="738"/>
        <end position="779"/>
    </location>
</feature>
<feature type="compositionally biased region" description="Low complexity" evidence="7">
    <location>
        <begin position="864"/>
        <end position="878"/>
    </location>
</feature>
<feature type="compositionally biased region" description="Low complexity" evidence="7">
    <location>
        <begin position="933"/>
        <end position="961"/>
    </location>
</feature>
<feature type="compositionally biased region" description="Basic residues" evidence="7">
    <location>
        <begin position="1069"/>
        <end position="1082"/>
    </location>
</feature>
<feature type="compositionally biased region" description="Basic and acidic residues" evidence="7">
    <location>
        <begin position="1083"/>
        <end position="1092"/>
    </location>
</feature>
<feature type="compositionally biased region" description="Low complexity" evidence="7">
    <location>
        <begin position="1104"/>
        <end position="1132"/>
    </location>
</feature>
<feature type="compositionally biased region" description="Polar residues" evidence="7">
    <location>
        <begin position="1139"/>
        <end position="1148"/>
    </location>
</feature>
<feature type="compositionally biased region" description="Low complexity" evidence="7">
    <location>
        <begin position="1149"/>
        <end position="1174"/>
    </location>
</feature>
<feature type="compositionally biased region" description="Polar residues" evidence="7">
    <location>
        <begin position="1228"/>
        <end position="1237"/>
    </location>
</feature>
<feature type="compositionally biased region" description="Basic and acidic residues" evidence="7">
    <location>
        <begin position="1278"/>
        <end position="1294"/>
    </location>
</feature>
<feature type="compositionally biased region" description="Low complexity" evidence="7">
    <location>
        <begin position="1519"/>
        <end position="1535"/>
    </location>
</feature>
<feature type="active site" description="Proton acceptor" evidence="2 4 6">
    <location>
        <position position="498"/>
    </location>
</feature>
<feature type="binding site" evidence="2 4">
    <location>
        <begin position="381"/>
        <end position="389"/>
    </location>
    <ligand>
        <name>ATP</name>
        <dbReference type="ChEBI" id="CHEBI:30616"/>
    </ligand>
</feature>
<feature type="binding site" evidence="2 4">
    <location>
        <position position="404"/>
    </location>
    <ligand>
        <name>ATP</name>
        <dbReference type="ChEBI" id="CHEBI:30616"/>
    </ligand>
</feature>
<feature type="modified residue" description="Phosphoserine" evidence="16">
    <location>
        <position position="90"/>
    </location>
</feature>
<feature type="modified residue" description="Phosphoserine" evidence="16">
    <location>
        <position position="139"/>
    </location>
</feature>
<feature type="modified residue" description="Phosphoserine" evidence="16">
    <location>
        <position position="167"/>
    </location>
</feature>
<feature type="modified residue" description="Phosphoserine" evidence="1">
    <location>
        <position position="346"/>
    </location>
</feature>
<feature type="modified residue" description="Phosphothreonine" evidence="1">
    <location>
        <position position="351"/>
    </location>
</feature>
<feature type="modified residue" description="Phosphoserine" evidence="1">
    <location>
        <position position="689"/>
    </location>
</feature>
<feature type="modified residue" description="Phosphoserine" evidence="16">
    <location>
        <position position="895"/>
    </location>
</feature>
<feature type="modified residue" description="Phosphoserine" evidence="1">
    <location>
        <position position="954"/>
    </location>
</feature>
<feature type="modified residue" description="Phosphoserine" evidence="1">
    <location>
        <position position="1414"/>
    </location>
</feature>
<feature type="mutagenesis site" description="Mutant heterozygous mice have a thicker corpus callosum, hypoplastic cortex and cerebellum, increased neuronal apoptosis, and decreased protein levels." evidence="9">
    <location>
        <position position="279"/>
    </location>
</feature>
<feature type="sequence conflict" description="In Ref. 1; AAD50548." evidence="11" ref="1">
    <original>R</original>
    <variation>P</variation>
    <location>
        <position position="158"/>
    </location>
</feature>
<feature type="sequence conflict" description="In Ref. 1; AAD50548." evidence="11" ref="1">
    <original>LR</original>
    <variation>P</variation>
    <location>
        <begin position="197"/>
        <end position="198"/>
    </location>
</feature>
<feature type="sequence conflict" description="In Ref. 1; AAD50548." evidence="11" ref="1">
    <original>S</original>
    <variation>T</variation>
    <location>
        <position position="647"/>
    </location>
</feature>
<feature type="sequence conflict" description="In Ref. 1; AAD50548." evidence="11" ref="1">
    <original>D</original>
    <variation>E</variation>
    <location>
        <position position="672"/>
    </location>
</feature>
<feature type="sequence conflict" description="In Ref. 1; AAD50548." evidence="11" ref="1">
    <original>H</original>
    <variation>L</variation>
    <location>
        <position position="1190"/>
    </location>
</feature>
<feature type="sequence conflict" description="In Ref. 1; AAD50548." evidence="11" ref="1">
    <original>SPPPLPGHTVGSSHTTQSFPAKLHSSPPVVRP</original>
    <variation>ARRRCQATRWAAHIHAELPCQTTYIATCVRR</variation>
    <location>
        <begin position="1219"/>
        <end position="1250"/>
    </location>
</feature>
<feature type="sequence conflict" description="In Ref. 1; AAD50548." evidence="11" ref="1">
    <original>L</original>
    <variation>V</variation>
    <location>
        <position position="1454"/>
    </location>
</feature>
<protein>
    <recommendedName>
        <fullName>Microtubule-associated serine/threonine-protein kinase 1</fullName>
        <ecNumber>2.7.11.1</ecNumber>
    </recommendedName>
    <alternativeName>
        <fullName>Syntrophin-associated serine/threonine-protein kinase</fullName>
    </alternativeName>
</protein>
<proteinExistence type="evidence at protein level"/>
<sequence>MSDSLWTALSNFSMPSFPGGSMFRRTKSCRTSNRKSLILTSTSPTLPRPHSPLPGHLGSSPLDSPRNFSPNTPAHFSFASSRRADGRRWSLASLPSSGYGTNTPSSTVSSSCSSQERLHQLPYQPTVDELHFLSKHFGSTESITDEDGGRRSPAVRPRSRSLSPGRSPSSYDNEIVMMNHVYKERFPKATAQMEEKLRDFARAYEPDSVLPLADGVLSFIHHQIIELARDCLTKSRDGLITTVYFYELQENLEKLLQDAYERSESLEVAFVTQLVKKLLIIISRPARLLECLEFNPEEFYHLLEAAEGHAKEGHLVKTDIPRYIIRQLGLTRDPFPDVVRLEEQDSGGSNTPEQDDTSEGRSSTSKAKKPPGESDFDTIKLISNGAYGAVYLVRHRDTRQRFAMKKINKQNLILRNQIQQAFVERDILTFAENPFVVGMFCSFETRRHLCMVMEYVEGGDCATLLKNIGALPVEMARMYFAETVLALEYLHNYGIVHRDLKPDNLLITSMGHIKLTDFGLSKMGLMSLTTNLYEGHIEKDAREFLDKQVCGTPEYIAPEVILRQGYGKPVDWWAMGIILYEFLVGCVPFFGDTPEELFGQVISDDILWPEGDEALPTDAQLLISSLLQTNPLVRLGAGGAFEVKQHSFFRDLDWTGLLRQKAEFIPHLESEDDTSYFDTRSDRYHHVNSYDEDDTTEEEPVEIRQFSSCSPRFSKVYSSMEQLSQHEPKTPVSASGASKRDPSAKGPEEKVAGKREGLGGLTLREKTWRGGSPEIKRFSASEASFLEGEASPPLGARRRFSALLEPSRFTAPQEDEDEARLRRPPRPSSDPPSSLDTRVPKEAVQGEGTSTPGEPEATERSHPGDLGPPSKDGDPSGPRATNDLVLRRARHQQLSGDLAVEKRPSRTGGKVIKSASATALSVMIPAVDPHGGSPLASPMSPRSLSSNPSSRDSSPSRDYSPAVSGLRSPITIQRSGKKYGFTLRAIRVYMGDSDVYSVHHIVWHVEEGGPAQEAGLCAGDLITHVNGEPVHGMVHPEVVELILKSGNKVAVTTTPFENTSIRIGPARRSSYKAKMARRNKRPSAKDGQESKKRSSLFRKITKQSNLLHTSRSLSSLNRSLSSSDSLPGSPTHGLPARSPTHSYRSTPDSAYLGASSQSSSPASSTPNSPASSASHHIRPSTLHGLSPKLHRQYRSARCKSAGNIPLSPLAHTPSPTQASPPPLPGHTVGSSHTTQSFPAKLHSSPPVVRPRPKSAEPPRSPLLKRVQSAEKLGASLGADKKGALRKHSLEVGHPDFRKDFHGELALHSLAESDGETPPIEGPGATRQVAVRRLGRQESPLSLGADPLLPDGVQRPMASSKEDSAGGTEACTPPRATTPGSRTLERDSGCTRHQSVQTEDGPGGVARALAKAALSPVQEHETGRRSSSGEAGTPPVPIVVEPARPGVKTQAPQPLGTDSKGLKEPVAQMPLMPDAPRGRERWVLEEVEERTTLSGLRSKPASPKLSPDPQTPTLVPTKNVPRSAAPSVPPASLMVPGTKPEAGLNSRCPAEAVTPAGLTKTGAPSPASLGP</sequence>
<evidence type="ECO:0000250" key="1">
    <source>
        <dbReference type="UniProtKB" id="Q810W7"/>
    </source>
</evidence>
<evidence type="ECO:0000250" key="2">
    <source>
        <dbReference type="UniProtKB" id="Q9BXM7"/>
    </source>
</evidence>
<evidence type="ECO:0000255" key="3">
    <source>
        <dbReference type="PROSITE-ProRule" id="PRU00143"/>
    </source>
</evidence>
<evidence type="ECO:0000255" key="4">
    <source>
        <dbReference type="PROSITE-ProRule" id="PRU00159"/>
    </source>
</evidence>
<evidence type="ECO:0000255" key="5">
    <source>
        <dbReference type="PROSITE-ProRule" id="PRU00618"/>
    </source>
</evidence>
<evidence type="ECO:0000255" key="6">
    <source>
        <dbReference type="PROSITE-ProRule" id="PRU10027"/>
    </source>
</evidence>
<evidence type="ECO:0000256" key="7">
    <source>
        <dbReference type="SAM" id="MobiDB-lite"/>
    </source>
</evidence>
<evidence type="ECO:0000269" key="8">
    <source>
    </source>
</evidence>
<evidence type="ECO:0000269" key="9">
    <source>
    </source>
</evidence>
<evidence type="ECO:0000303" key="10">
    <source>
    </source>
</evidence>
<evidence type="ECO:0000305" key="11"/>
<evidence type="ECO:0000312" key="12">
    <source>
        <dbReference type="EMBL" id="AAD50548.1"/>
    </source>
</evidence>
<evidence type="ECO:0000312" key="13">
    <source>
        <dbReference type="EMBL" id="AAH54524.1"/>
    </source>
</evidence>
<evidence type="ECO:0000312" key="14">
    <source>
        <dbReference type="EMBL" id="BAC65693.3"/>
    </source>
</evidence>
<evidence type="ECO:0000312" key="15">
    <source>
        <dbReference type="MGI" id="MGI:1861901"/>
    </source>
</evidence>
<evidence type="ECO:0007744" key="16">
    <source>
    </source>
</evidence>
<comment type="function">
    <text evidence="8 9 10">Microtubule-associated protein essential for correct brain development (PubMed:30449657). Appears to link the dystrophin/utrophin network with microtubule filaments via the syntrophins. Phosphorylation of DMD or UTRN may modulate their affinities for associated proteins.</text>
</comment>
<comment type="catalytic activity">
    <reaction evidence="2">
        <text>L-seryl-[protein] + ATP = O-phospho-L-seryl-[protein] + ADP + H(+)</text>
        <dbReference type="Rhea" id="RHEA:17989"/>
        <dbReference type="Rhea" id="RHEA-COMP:9863"/>
        <dbReference type="Rhea" id="RHEA-COMP:11604"/>
        <dbReference type="ChEBI" id="CHEBI:15378"/>
        <dbReference type="ChEBI" id="CHEBI:29999"/>
        <dbReference type="ChEBI" id="CHEBI:30616"/>
        <dbReference type="ChEBI" id="CHEBI:83421"/>
        <dbReference type="ChEBI" id="CHEBI:456216"/>
        <dbReference type="EC" id="2.7.11.1"/>
    </reaction>
</comment>
<comment type="catalytic activity">
    <reaction evidence="2">
        <text>L-threonyl-[protein] + ATP = O-phospho-L-threonyl-[protein] + ADP + H(+)</text>
        <dbReference type="Rhea" id="RHEA:46608"/>
        <dbReference type="Rhea" id="RHEA-COMP:11060"/>
        <dbReference type="Rhea" id="RHEA-COMP:11605"/>
        <dbReference type="ChEBI" id="CHEBI:15378"/>
        <dbReference type="ChEBI" id="CHEBI:30013"/>
        <dbReference type="ChEBI" id="CHEBI:30616"/>
        <dbReference type="ChEBI" id="CHEBI:61977"/>
        <dbReference type="ChEBI" id="CHEBI:456216"/>
        <dbReference type="EC" id="2.7.11.1"/>
    </reaction>
</comment>
<comment type="cofactor">
    <cofactor evidence="2">
        <name>Mg(2+)</name>
        <dbReference type="ChEBI" id="CHEBI:18420"/>
    </cofactor>
</comment>
<comment type="subunit">
    <text evidence="8 9">Interacts with the microtubules (PubMed:30449657). Part of a low affinity complex that associates with, but is distinct from, the postsynaptic density. Interacts with SNTB2.</text>
</comment>
<comment type="interaction">
    <interactant intactId="EBI-491771">
        <id>Q9R1L5</id>
    </interactant>
    <interactant intactId="EBI-696162">
        <id>P60484</id>
        <label>PTEN</label>
    </interactant>
    <organismsDiffer>true</organismsDiffer>
    <experiments>3</experiments>
</comment>
<comment type="subcellular location">
    <subcellularLocation>
        <location evidence="8">Cell membrane</location>
        <topology evidence="8">Peripheral membrane protein</topology>
        <orientation evidence="8">Cytoplasmic side</orientation>
    </subcellularLocation>
    <subcellularLocation>
        <location evidence="8">Cytoplasm</location>
        <location evidence="8">Cytoskeleton</location>
    </subcellularLocation>
    <subcellularLocation>
        <location evidence="9">Cell projection</location>
        <location evidence="9">Axon</location>
    </subcellularLocation>
    <subcellularLocation>
        <location evidence="9">Cell projection</location>
        <location evidence="9">Dendrite</location>
    </subcellularLocation>
    <text evidence="9">Also localized in the soma of neurons (PubMed:30449657). Observed as punctate clusters in the processes of interneurons and along the cell body periphery. Colocalizes with syntrophins at the cell membrane.</text>
</comment>
<comment type="tissue specificity">
    <text evidence="8 9">Expressed in the brain (PubMed:30449657). Expressed in the developing cortical plate, the intermediate zone and corpus callosal fibers that cross the midline (PubMed:30449657). Detected at low levels in the testis, liver and spleen (PubMed:30449657). Expressed in proximity to neuronal nuclei throughout the cortex and cerebellum, and in the vascular endothelium. Also detected in ependymal cells, the choroid plexus, and in developing spermatid acrosomes.</text>
</comment>
<comment type="developmental stage">
    <text evidence="9">Expression in the brain begins at 12.5 dpc, peaks at 16.5 dpc, and decreases postnatally.</text>
</comment>
<comment type="disruption phenotype">
    <text evidence="9">Knockout mice do not show morphological defects.</text>
</comment>
<comment type="similarity">
    <text evidence="11">Belongs to the protein kinase superfamily. AGC Ser/Thr protein kinase family.</text>
</comment>
<comment type="sequence caution" evidence="11">
    <conflict type="frameshift">
        <sequence resource="EMBL-CDS" id="AAD50548"/>
    </conflict>
</comment>
<comment type="sequence caution" evidence="11">
    <conflict type="miscellaneous discrepancy">
        <sequence resource="EMBL-CDS" id="BAC65693"/>
    </conflict>
    <text>The sequence differs from that shown because it seems to be derived from a pre-mRNA.</text>
</comment>
<dbReference type="EC" id="2.7.11.1"/>
<dbReference type="EMBL" id="AF077818">
    <property type="protein sequence ID" value="AAD50548.1"/>
    <property type="status" value="ALT_FRAME"/>
    <property type="molecule type" value="mRNA"/>
</dbReference>
<dbReference type="EMBL" id="BC054524">
    <property type="protein sequence ID" value="AAH54524.1"/>
    <property type="molecule type" value="mRNA"/>
</dbReference>
<dbReference type="EMBL" id="AK122411">
    <property type="protein sequence ID" value="BAC65693.3"/>
    <property type="status" value="ALT_SEQ"/>
    <property type="molecule type" value="Transcribed_RNA"/>
</dbReference>
<dbReference type="CCDS" id="CCDS40415.1"/>
<dbReference type="RefSeq" id="NP_064329.2">
    <property type="nucleotide sequence ID" value="NM_019945.2"/>
</dbReference>
<dbReference type="RefSeq" id="XP_036010090.1">
    <property type="nucleotide sequence ID" value="XM_036154197.1"/>
</dbReference>
<dbReference type="SMR" id="Q9R1L5"/>
<dbReference type="BioGRID" id="208038">
    <property type="interactions" value="8"/>
</dbReference>
<dbReference type="FunCoup" id="Q9R1L5">
    <property type="interactions" value="529"/>
</dbReference>
<dbReference type="IntAct" id="Q9R1L5">
    <property type="interactions" value="3"/>
</dbReference>
<dbReference type="MINT" id="Q9R1L5"/>
<dbReference type="STRING" id="10090.ENSMUSP00000105363"/>
<dbReference type="GlyGen" id="Q9R1L5">
    <property type="glycosylation" value="9 sites, 3 N-linked glycans (3 sites), 1 O-linked glycan (3 sites)"/>
</dbReference>
<dbReference type="iPTMnet" id="Q9R1L5"/>
<dbReference type="PhosphoSitePlus" id="Q9R1L5"/>
<dbReference type="SwissPalm" id="Q9R1L5"/>
<dbReference type="PaxDb" id="10090-ENSMUSP00000105363"/>
<dbReference type="PeptideAtlas" id="Q9R1L5"/>
<dbReference type="ProteomicsDB" id="292091"/>
<dbReference type="Antibodypedia" id="26218">
    <property type="antibodies" value="93 antibodies from 23 providers"/>
</dbReference>
<dbReference type="DNASU" id="56527"/>
<dbReference type="Ensembl" id="ENSMUST00000109741.9">
    <property type="protein sequence ID" value="ENSMUSP00000105363.3"/>
    <property type="gene ID" value="ENSMUSG00000053693.17"/>
</dbReference>
<dbReference type="GeneID" id="56527"/>
<dbReference type="KEGG" id="mmu:56527"/>
<dbReference type="UCSC" id="uc009mof.1">
    <property type="organism name" value="mouse"/>
</dbReference>
<dbReference type="AGR" id="MGI:1861901"/>
<dbReference type="CTD" id="22983"/>
<dbReference type="MGI" id="MGI:1861901">
    <property type="gene designation" value="Mast1"/>
</dbReference>
<dbReference type="VEuPathDB" id="HostDB:ENSMUSG00000053693"/>
<dbReference type="eggNOG" id="KOG0605">
    <property type="taxonomic scope" value="Eukaryota"/>
</dbReference>
<dbReference type="eggNOG" id="KOG0606">
    <property type="taxonomic scope" value="Eukaryota"/>
</dbReference>
<dbReference type="GeneTree" id="ENSGT00940000157700"/>
<dbReference type="HOGENOM" id="CLU_000288_9_0_1"/>
<dbReference type="InParanoid" id="Q9R1L5"/>
<dbReference type="OMA" id="TNLYEGF"/>
<dbReference type="OrthoDB" id="10070999at2759"/>
<dbReference type="PhylomeDB" id="Q9R1L5"/>
<dbReference type="TreeFam" id="TF313149"/>
<dbReference type="BRENDA" id="2.7.11.1">
    <property type="organism ID" value="3474"/>
</dbReference>
<dbReference type="BioGRID-ORCS" id="56527">
    <property type="hits" value="6 hits in 81 CRISPR screens"/>
</dbReference>
<dbReference type="ChiTaRS" id="Mast1">
    <property type="organism name" value="mouse"/>
</dbReference>
<dbReference type="PRO" id="PR:Q9R1L5"/>
<dbReference type="Proteomes" id="UP000000589">
    <property type="component" value="Chromosome 8"/>
</dbReference>
<dbReference type="RNAct" id="Q9R1L5">
    <property type="molecule type" value="protein"/>
</dbReference>
<dbReference type="Bgee" id="ENSMUSG00000053693">
    <property type="expression patterns" value="Expressed in motor neuron and 160 other cell types or tissues"/>
</dbReference>
<dbReference type="ExpressionAtlas" id="Q9R1L5">
    <property type="expression patterns" value="baseline and differential"/>
</dbReference>
<dbReference type="GO" id="GO:0030424">
    <property type="term" value="C:axon"/>
    <property type="evidence" value="ECO:0007669"/>
    <property type="project" value="UniProtKB-SubCell"/>
</dbReference>
<dbReference type="GO" id="GO:0005737">
    <property type="term" value="C:cytoplasm"/>
    <property type="evidence" value="ECO:0007669"/>
    <property type="project" value="UniProtKB-KW"/>
</dbReference>
<dbReference type="GO" id="GO:0005856">
    <property type="term" value="C:cytoskeleton"/>
    <property type="evidence" value="ECO:0007669"/>
    <property type="project" value="UniProtKB-SubCell"/>
</dbReference>
<dbReference type="GO" id="GO:0030425">
    <property type="term" value="C:dendrite"/>
    <property type="evidence" value="ECO:0007669"/>
    <property type="project" value="UniProtKB-SubCell"/>
</dbReference>
<dbReference type="GO" id="GO:0016020">
    <property type="term" value="C:membrane"/>
    <property type="evidence" value="ECO:0000314"/>
    <property type="project" value="UniProtKB"/>
</dbReference>
<dbReference type="GO" id="GO:0043005">
    <property type="term" value="C:neuron projection"/>
    <property type="evidence" value="ECO:0000314"/>
    <property type="project" value="UniProtKB"/>
</dbReference>
<dbReference type="GO" id="GO:0043025">
    <property type="term" value="C:neuronal cell body"/>
    <property type="evidence" value="ECO:0000314"/>
    <property type="project" value="UniProtKB"/>
</dbReference>
<dbReference type="GO" id="GO:0005886">
    <property type="term" value="C:plasma membrane"/>
    <property type="evidence" value="ECO:0007669"/>
    <property type="project" value="UniProtKB-SubCell"/>
</dbReference>
<dbReference type="GO" id="GO:0005524">
    <property type="term" value="F:ATP binding"/>
    <property type="evidence" value="ECO:0000250"/>
    <property type="project" value="UniProtKB"/>
</dbReference>
<dbReference type="GO" id="GO:0000287">
    <property type="term" value="F:magnesium ion binding"/>
    <property type="evidence" value="ECO:0000250"/>
    <property type="project" value="UniProtKB"/>
</dbReference>
<dbReference type="GO" id="GO:0008017">
    <property type="term" value="F:microtubule binding"/>
    <property type="evidence" value="ECO:0000314"/>
    <property type="project" value="UniProtKB"/>
</dbReference>
<dbReference type="GO" id="GO:0106310">
    <property type="term" value="F:protein serine kinase activity"/>
    <property type="evidence" value="ECO:0007669"/>
    <property type="project" value="RHEA"/>
</dbReference>
<dbReference type="GO" id="GO:0004674">
    <property type="term" value="F:protein serine/threonine kinase activity"/>
    <property type="evidence" value="ECO:0000250"/>
    <property type="project" value="UniProtKB"/>
</dbReference>
<dbReference type="GO" id="GO:0007420">
    <property type="term" value="P:brain development"/>
    <property type="evidence" value="ECO:0000315"/>
    <property type="project" value="UniProtKB"/>
</dbReference>
<dbReference type="GO" id="GO:0007010">
    <property type="term" value="P:cytoskeleton organization"/>
    <property type="evidence" value="ECO:0000314"/>
    <property type="project" value="UniProtKB"/>
</dbReference>
<dbReference type="GO" id="GO:0035556">
    <property type="term" value="P:intracellular signal transduction"/>
    <property type="evidence" value="ECO:0000250"/>
    <property type="project" value="UniProtKB"/>
</dbReference>
<dbReference type="GO" id="GO:0006468">
    <property type="term" value="P:protein phosphorylation"/>
    <property type="evidence" value="ECO:0000250"/>
    <property type="project" value="UniProtKB"/>
</dbReference>
<dbReference type="CDD" id="cd23073">
    <property type="entry name" value="PDZ_MAST1"/>
    <property type="match status" value="1"/>
</dbReference>
<dbReference type="CDD" id="cd05609">
    <property type="entry name" value="STKc_MAST"/>
    <property type="match status" value="1"/>
</dbReference>
<dbReference type="FunFam" id="3.30.200.20:FF:001045">
    <property type="entry name" value="Microtubule-associated serine/threonine kinase 1a"/>
    <property type="match status" value="1"/>
</dbReference>
<dbReference type="FunFam" id="1.10.510.10:FF:000012">
    <property type="entry name" value="microtubule-associated serine/threonine-protein kinase 2 isoform X1"/>
    <property type="match status" value="1"/>
</dbReference>
<dbReference type="FunFam" id="1.20.1480.20:FF:000001">
    <property type="entry name" value="microtubule-associated serine/threonine-protein kinase 4 isoform X1"/>
    <property type="match status" value="1"/>
</dbReference>
<dbReference type="FunFam" id="2.30.42.10:FF:000008">
    <property type="entry name" value="microtubule-associated serine/threonine-protein kinase 4 isoform X2"/>
    <property type="match status" value="1"/>
</dbReference>
<dbReference type="Gene3D" id="2.30.42.10">
    <property type="match status" value="1"/>
</dbReference>
<dbReference type="Gene3D" id="1.20.1480.20">
    <property type="entry name" value="MAST3 pre-PK domain-like"/>
    <property type="match status" value="1"/>
</dbReference>
<dbReference type="Gene3D" id="3.30.200.20">
    <property type="entry name" value="Phosphorylase Kinase, domain 1"/>
    <property type="match status" value="1"/>
</dbReference>
<dbReference type="Gene3D" id="1.10.510.10">
    <property type="entry name" value="Transferase(Phosphotransferase) domain 1"/>
    <property type="match status" value="1"/>
</dbReference>
<dbReference type="InterPro" id="IPR000961">
    <property type="entry name" value="AGC-kinase_C"/>
</dbReference>
<dbReference type="InterPro" id="IPR011009">
    <property type="entry name" value="Kinase-like_dom_sf"/>
</dbReference>
<dbReference type="InterPro" id="IPR037711">
    <property type="entry name" value="MAST"/>
</dbReference>
<dbReference type="InterPro" id="IPR015022">
    <property type="entry name" value="MAST_pre-PK_dom"/>
</dbReference>
<dbReference type="InterPro" id="IPR023142">
    <property type="entry name" value="MAST_pre-PK_dom_sf"/>
</dbReference>
<dbReference type="InterPro" id="IPR001478">
    <property type="entry name" value="PDZ"/>
</dbReference>
<dbReference type="InterPro" id="IPR041489">
    <property type="entry name" value="PDZ_6"/>
</dbReference>
<dbReference type="InterPro" id="IPR036034">
    <property type="entry name" value="PDZ_sf"/>
</dbReference>
<dbReference type="InterPro" id="IPR000719">
    <property type="entry name" value="Prot_kinase_dom"/>
</dbReference>
<dbReference type="InterPro" id="IPR008271">
    <property type="entry name" value="Ser/Thr_kinase_AS"/>
</dbReference>
<dbReference type="InterPro" id="IPR050236">
    <property type="entry name" value="Ser_Thr_kinase_AGC"/>
</dbReference>
<dbReference type="PANTHER" id="PTHR24356:SF150">
    <property type="entry name" value="MICROTUBULE-ASSOCIATED SERINE_THREONINE-PROTEIN KINASE 1"/>
    <property type="match status" value="1"/>
</dbReference>
<dbReference type="PANTHER" id="PTHR24356">
    <property type="entry name" value="SERINE/THREONINE-PROTEIN KINASE"/>
    <property type="match status" value="1"/>
</dbReference>
<dbReference type="Pfam" id="PF08926">
    <property type="entry name" value="DUF1908"/>
    <property type="match status" value="1"/>
</dbReference>
<dbReference type="Pfam" id="PF17820">
    <property type="entry name" value="PDZ_6"/>
    <property type="match status" value="1"/>
</dbReference>
<dbReference type="Pfam" id="PF00069">
    <property type="entry name" value="Pkinase"/>
    <property type="match status" value="1"/>
</dbReference>
<dbReference type="SMART" id="SM00228">
    <property type="entry name" value="PDZ"/>
    <property type="match status" value="1"/>
</dbReference>
<dbReference type="SMART" id="SM00220">
    <property type="entry name" value="S_TKc"/>
    <property type="match status" value="1"/>
</dbReference>
<dbReference type="SUPFAM" id="SSF140482">
    <property type="entry name" value="MAST3 pre-PK domain-like"/>
    <property type="match status" value="1"/>
</dbReference>
<dbReference type="SUPFAM" id="SSF50156">
    <property type="entry name" value="PDZ domain-like"/>
    <property type="match status" value="1"/>
</dbReference>
<dbReference type="SUPFAM" id="SSF56112">
    <property type="entry name" value="Protein kinase-like (PK-like)"/>
    <property type="match status" value="1"/>
</dbReference>
<dbReference type="PROSITE" id="PS51285">
    <property type="entry name" value="AGC_KINASE_CTER"/>
    <property type="match status" value="1"/>
</dbReference>
<dbReference type="PROSITE" id="PS50106">
    <property type="entry name" value="PDZ"/>
    <property type="match status" value="1"/>
</dbReference>
<dbReference type="PROSITE" id="PS50011">
    <property type="entry name" value="PROTEIN_KINASE_DOM"/>
    <property type="match status" value="1"/>
</dbReference>
<dbReference type="PROSITE" id="PS00108">
    <property type="entry name" value="PROTEIN_KINASE_ST"/>
    <property type="match status" value="1"/>
</dbReference>